<comment type="function">
    <text evidence="5">Brassicaceae-specific phytocytokine (plant endogenous peptide released into the apoplast) perceived by MIK2 in a BAK1/SERK3 and SERK4 coreceptors-dependent manner, that modulates various physiological and antimicrobial processes including growth prevention and reactive oxygen species (ROS) response regulation (PubMed:34535661). Inhibits root growth (PubMed:34535661).</text>
</comment>
<comment type="subunit">
    <text evidence="1">Interacts with MIK2 (via extracellular leucine-rich repeat domain); this interaction triggers the formation of complex between MIK2 and the BAK1/SERK3 and SERK4 coreceptors, and subsequent BAK1 activation by phosphorylation.</text>
</comment>
<comment type="subcellular location">
    <subcellularLocation>
        <location evidence="4">Cell membrane</location>
    </subcellularLocation>
    <subcellularLocation>
        <location evidence="4">Secreted</location>
        <location evidence="4">Extracellular space</location>
        <location evidence="4">Apoplast</location>
    </subcellularLocation>
    <subcellularLocation>
        <location evidence="4">Endoplasmic reticulum</location>
    </subcellularLocation>
    <subcellularLocation>
        <location evidence="4">Golgi apparatus</location>
    </subcellularLocation>
    <text evidence="4">Observed in a reticular pattern and a perinuclear ring (PubMed:31001913). The precursor of SCOOP15, PROSCOOP15, accumulates at the plasma membrane and is proteolytically cleaved to release the SCOOP15 in the apoplasm (PubMed:31001913).</text>
</comment>
<comment type="tissue specificity">
    <text evidence="4 5">Mostly expressed in leaves, and, to a lower extent, in seedlings shoots, roots, stems, siliques, seeds and flowers.</text>
</comment>
<comment type="induction">
    <text evidence="4">Induced by salt stress and salicylic acid (SA), but repressed by jasmonate (MeJA), mainly in shoots.</text>
</comment>
<comment type="similarity">
    <text evidence="8">Belongs to the serine rich endogenous peptide (SCOOP) phytocytokine family.</text>
</comment>
<comment type="sequence caution" evidence="8">
    <conflict type="erroneous gene model prediction">
        <sequence resource="EMBL-CDS" id="CAC35881"/>
    </conflict>
</comment>
<keyword id="KW-0052">Apoplast</keyword>
<keyword id="KW-1003">Cell membrane</keyword>
<keyword id="KW-0165">Cleavage on pair of basic residues</keyword>
<keyword id="KW-0256">Endoplasmic reticulum</keyword>
<keyword id="KW-0333">Golgi apparatus</keyword>
<keyword id="KW-0472">Membrane</keyword>
<keyword id="KW-1185">Reference proteome</keyword>
<keyword id="KW-0677">Repeat</keyword>
<keyword id="KW-0964">Secreted</keyword>
<keyword id="KW-0732">Signal</keyword>
<feature type="signal peptide" evidence="2">
    <location>
        <begin position="1"/>
        <end position="28"/>
    </location>
</feature>
<feature type="propeptide" id="PRO_0000457242" description="Removed in mature form" evidence="1">
    <location>
        <begin position="29"/>
        <end status="unknown"/>
    </location>
</feature>
<feature type="peptide" id="PRO_0000457243" description="Serine rich endogenous peptide 15" evidence="1">
    <location>
        <begin status="unknown"/>
        <end position="80"/>
    </location>
</feature>
<feature type="region of interest" description="Disordered" evidence="3">
    <location>
        <begin position="37"/>
        <end position="80"/>
    </location>
</feature>
<feature type="short sequence motif" description="SCOOP motif 1" evidence="9">
    <location>
        <begin position="32"/>
        <end position="46"/>
    </location>
</feature>
<feature type="short sequence motif" description="SxS motif essential for MIK2 binding" evidence="1">
    <location>
        <begin position="38"/>
        <end position="40"/>
    </location>
</feature>
<feature type="short sequence motif" description="SCOOP motif 2" evidence="9">
    <location>
        <begin position="66"/>
        <end position="80"/>
    </location>
</feature>
<feature type="short sequence motif" description="SxS motif essential for MIK2 binding" evidence="1">
    <location>
        <begin position="72"/>
        <end position="74"/>
    </location>
</feature>
<feature type="compositionally biased region" description="Polar residues" evidence="3">
    <location>
        <begin position="71"/>
        <end position="80"/>
    </location>
</feature>
<proteinExistence type="evidence at transcript level"/>
<reference key="1">
    <citation type="journal article" date="2000" name="Nature">
        <title>Sequence and analysis of chromosome 5 of the plant Arabidopsis thaliana.</title>
        <authorList>
            <person name="Tabata S."/>
            <person name="Kaneko T."/>
            <person name="Nakamura Y."/>
            <person name="Kotani H."/>
            <person name="Kato T."/>
            <person name="Asamizu E."/>
            <person name="Miyajima N."/>
            <person name="Sasamoto S."/>
            <person name="Kimura T."/>
            <person name="Hosouchi T."/>
            <person name="Kawashima K."/>
            <person name="Kohara M."/>
            <person name="Matsumoto M."/>
            <person name="Matsuno A."/>
            <person name="Muraki A."/>
            <person name="Nakayama S."/>
            <person name="Nakazaki N."/>
            <person name="Naruo K."/>
            <person name="Okumura S."/>
            <person name="Shinpo S."/>
            <person name="Takeuchi C."/>
            <person name="Wada T."/>
            <person name="Watanabe A."/>
            <person name="Yamada M."/>
            <person name="Yasuda M."/>
            <person name="Sato S."/>
            <person name="de la Bastide M."/>
            <person name="Huang E."/>
            <person name="Spiegel L."/>
            <person name="Gnoj L."/>
            <person name="O'Shaughnessy A."/>
            <person name="Preston R."/>
            <person name="Habermann K."/>
            <person name="Murray J."/>
            <person name="Johnson D."/>
            <person name="Rohlfing T."/>
            <person name="Nelson J."/>
            <person name="Stoneking T."/>
            <person name="Pepin K."/>
            <person name="Spieth J."/>
            <person name="Sekhon M."/>
            <person name="Armstrong J."/>
            <person name="Becker M."/>
            <person name="Belter E."/>
            <person name="Cordum H."/>
            <person name="Cordes M."/>
            <person name="Courtney L."/>
            <person name="Courtney W."/>
            <person name="Dante M."/>
            <person name="Du H."/>
            <person name="Edwards J."/>
            <person name="Fryman J."/>
            <person name="Haakensen B."/>
            <person name="Lamar E."/>
            <person name="Latreille P."/>
            <person name="Leonard S."/>
            <person name="Meyer R."/>
            <person name="Mulvaney E."/>
            <person name="Ozersky P."/>
            <person name="Riley A."/>
            <person name="Strowmatt C."/>
            <person name="Wagner-McPherson C."/>
            <person name="Wollam A."/>
            <person name="Yoakum M."/>
            <person name="Bell M."/>
            <person name="Dedhia N."/>
            <person name="Parnell L."/>
            <person name="Shah R."/>
            <person name="Rodriguez M."/>
            <person name="Hoon See L."/>
            <person name="Vil D."/>
            <person name="Baker J."/>
            <person name="Kirchoff K."/>
            <person name="Toth K."/>
            <person name="King L."/>
            <person name="Bahret A."/>
            <person name="Miller B."/>
            <person name="Marra M.A."/>
            <person name="Martienssen R."/>
            <person name="McCombie W.R."/>
            <person name="Wilson R.K."/>
            <person name="Murphy G."/>
            <person name="Bancroft I."/>
            <person name="Volckaert G."/>
            <person name="Wambutt R."/>
            <person name="Duesterhoeft A."/>
            <person name="Stiekema W."/>
            <person name="Pohl T."/>
            <person name="Entian K.-D."/>
            <person name="Terryn N."/>
            <person name="Hartley N."/>
            <person name="Bent E."/>
            <person name="Johnson S."/>
            <person name="Langham S.-A."/>
            <person name="McCullagh B."/>
            <person name="Robben J."/>
            <person name="Grymonprez B."/>
            <person name="Zimmermann W."/>
            <person name="Ramsperger U."/>
            <person name="Wedler H."/>
            <person name="Balke K."/>
            <person name="Wedler E."/>
            <person name="Peters S."/>
            <person name="van Staveren M."/>
            <person name="Dirkse W."/>
            <person name="Mooijman P."/>
            <person name="Klein Lankhorst R."/>
            <person name="Weitzenegger T."/>
            <person name="Bothe G."/>
            <person name="Rose M."/>
            <person name="Hauf J."/>
            <person name="Berneiser S."/>
            <person name="Hempel S."/>
            <person name="Feldpausch M."/>
            <person name="Lamberth S."/>
            <person name="Villarroel R."/>
            <person name="Gielen J."/>
            <person name="Ardiles W."/>
            <person name="Bents O."/>
            <person name="Lemcke K."/>
            <person name="Kolesov G."/>
            <person name="Mayer K.F.X."/>
            <person name="Rudd S."/>
            <person name="Schoof H."/>
            <person name="Schueller C."/>
            <person name="Zaccaria P."/>
            <person name="Mewes H.-W."/>
            <person name="Bevan M."/>
            <person name="Fransz P.F."/>
        </authorList>
    </citation>
    <scope>NUCLEOTIDE SEQUENCE [LARGE SCALE GENOMIC DNA]</scope>
    <source>
        <strain>cv. Columbia</strain>
    </source>
</reference>
<reference key="2">
    <citation type="journal article" date="2017" name="Plant J.">
        <title>Araport11: a complete reannotation of the Arabidopsis thaliana reference genome.</title>
        <authorList>
            <person name="Cheng C.Y."/>
            <person name="Krishnakumar V."/>
            <person name="Chan A.P."/>
            <person name="Thibaud-Nissen F."/>
            <person name="Schobel S."/>
            <person name="Town C.D."/>
        </authorList>
    </citation>
    <scope>GENOME REANNOTATION</scope>
    <source>
        <strain>cv. Columbia</strain>
    </source>
</reference>
<reference key="3">
    <citation type="journal article" date="2019" name="J. Exp. Bot.">
        <title>The SCOOP12 peptide regulates defense response and root elongation in Arabidopsis thaliana.</title>
        <authorList>
            <person name="Gully K."/>
            <person name="Pelletier S."/>
            <person name="Guillou M.-C."/>
            <person name="Ferrand M."/>
            <person name="Aligon S."/>
            <person name="Pokotylo I."/>
            <person name="Perrin A."/>
            <person name="Vergne E."/>
            <person name="Fagard M."/>
            <person name="Ruelland E."/>
            <person name="Grappin P."/>
            <person name="Bucher E."/>
            <person name="Renou J.-P."/>
            <person name="Aubourg S."/>
        </authorList>
    </citation>
    <scope>GENE FAMILY</scope>
    <source>
        <strain>cv. Columbia</strain>
        <strain>cv. Wassilewskija</strain>
    </source>
</reference>
<reference key="4">
    <citation type="journal article" date="2020" name="J. Integr. Plant Biol.">
        <title>The Brassicaceae-specific secreted peptides, STMPs, function in plant growth and pathogen defense.</title>
        <authorList>
            <person name="Yu Z."/>
            <person name="Xu Y."/>
            <person name="Zhu L."/>
            <person name="Zhang L."/>
            <person name="Liu L."/>
            <person name="Zhang D."/>
            <person name="Li D."/>
            <person name="Wu C."/>
            <person name="Huang J."/>
            <person name="Yang G."/>
            <person name="Yan K."/>
            <person name="Zhang S."/>
            <person name="Zheng C."/>
        </authorList>
    </citation>
    <scope>SUBCELLULAR LOCATION</scope>
    <scope>TISSUE SPECIFICITY</scope>
    <scope>INDUCTION BY SALICYLIC ACID AND SALT</scope>
    <scope>GENE FAMILY</scope>
    <scope>NOMENCLATURE</scope>
    <source>
        <strain>cv. Columbia</strain>
    </source>
</reference>
<reference key="5">
    <citation type="journal article" date="2021" name="Nat. Commun.">
        <title>The Arabidopsis MIK2 receptor elicits immunity by sensing a conserved signature from phytocytokines and microbes.</title>
        <authorList>
            <person name="Hou S."/>
            <person name="Liu D."/>
            <person name="Huang S."/>
            <person name="Luo D."/>
            <person name="Liu Z."/>
            <person name="Xiang Q."/>
            <person name="Wang P."/>
            <person name="Mu R."/>
            <person name="Han Z."/>
            <person name="Chen S."/>
            <person name="Chai J."/>
            <person name="Shan L."/>
            <person name="He P."/>
        </authorList>
    </citation>
    <scope>FUNCTION</scope>
    <scope>TISSUE SPECIFICITY</scope>
    <scope>GENE FAMILY</scope>
    <scope>NOMENCLATURE</scope>
    <source>
        <strain>cv. Columbia</strain>
    </source>
</reference>
<dbReference type="EMBL" id="AL590346">
    <property type="protein sequence ID" value="CAC35881.1"/>
    <property type="status" value="ALT_SEQ"/>
    <property type="molecule type" value="Genomic_DNA"/>
</dbReference>
<dbReference type="EMBL" id="CP002688">
    <property type="protein sequence ID" value="AED91347.1"/>
    <property type="molecule type" value="Genomic_DNA"/>
</dbReference>
<dbReference type="RefSeq" id="NP_001078549.1">
    <property type="nucleotide sequence ID" value="NM_001085080.2"/>
</dbReference>
<dbReference type="SMR" id="F4KCH3"/>
<dbReference type="FunCoup" id="F4KCH3">
    <property type="interactions" value="30"/>
</dbReference>
<dbReference type="GlyGen" id="F4KCH3">
    <property type="glycosylation" value="1 site"/>
</dbReference>
<dbReference type="PaxDb" id="3702-AT5G08760.1"/>
<dbReference type="PRIDE" id="F4KCH3"/>
<dbReference type="EnsemblPlants" id="AT5G08760.1">
    <property type="protein sequence ID" value="AT5G08760.1"/>
    <property type="gene ID" value="AT5G08760"/>
</dbReference>
<dbReference type="GeneID" id="5008204"/>
<dbReference type="Gramene" id="AT5G08760.1">
    <property type="protein sequence ID" value="AT5G08760.1"/>
    <property type="gene ID" value="AT5G08760"/>
</dbReference>
<dbReference type="KEGG" id="ath:AT5G08760"/>
<dbReference type="Araport" id="AT5G08760"/>
<dbReference type="TAIR" id="AT5G08760">
    <property type="gene designation" value="STMP8"/>
</dbReference>
<dbReference type="HOGENOM" id="CLU_2593037_0_0_1"/>
<dbReference type="InParanoid" id="F4KCH3"/>
<dbReference type="OMA" id="DSRCANE"/>
<dbReference type="PRO" id="PR:F4KCH3"/>
<dbReference type="Proteomes" id="UP000006548">
    <property type="component" value="Chromosome 5"/>
</dbReference>
<dbReference type="ExpressionAtlas" id="F4KCH3">
    <property type="expression patterns" value="baseline and differential"/>
</dbReference>
<dbReference type="GO" id="GO:0048046">
    <property type="term" value="C:apoplast"/>
    <property type="evidence" value="ECO:0000314"/>
    <property type="project" value="UniProtKB"/>
</dbReference>
<dbReference type="GO" id="GO:0005783">
    <property type="term" value="C:endoplasmic reticulum"/>
    <property type="evidence" value="ECO:0000314"/>
    <property type="project" value="TAIR"/>
</dbReference>
<dbReference type="GO" id="GO:0005794">
    <property type="term" value="C:Golgi apparatus"/>
    <property type="evidence" value="ECO:0000314"/>
    <property type="project" value="TAIR"/>
</dbReference>
<dbReference type="GO" id="GO:0005886">
    <property type="term" value="C:plasma membrane"/>
    <property type="evidence" value="ECO:0000314"/>
    <property type="project" value="TAIR"/>
</dbReference>
<dbReference type="GO" id="GO:0030275">
    <property type="term" value="F:LRR domain binding"/>
    <property type="evidence" value="ECO:0000250"/>
    <property type="project" value="UniProtKB"/>
</dbReference>
<dbReference type="GO" id="GO:0033612">
    <property type="term" value="F:receptor serine/threonine kinase binding"/>
    <property type="evidence" value="ECO:0000250"/>
    <property type="project" value="UniProtKB"/>
</dbReference>
<dbReference type="GO" id="GO:0009753">
    <property type="term" value="P:response to jasmonic acid"/>
    <property type="evidence" value="ECO:0000270"/>
    <property type="project" value="UniProtKB"/>
</dbReference>
<dbReference type="GO" id="GO:0009751">
    <property type="term" value="P:response to salicylic acid"/>
    <property type="evidence" value="ECO:0000270"/>
    <property type="project" value="UniProtKB"/>
</dbReference>
<dbReference type="GO" id="GO:0009651">
    <property type="term" value="P:response to salt stress"/>
    <property type="evidence" value="ECO:0000270"/>
    <property type="project" value="UniProtKB"/>
</dbReference>
<evidence type="ECO:0000250" key="1">
    <source>
        <dbReference type="UniProtKB" id="B3H7I1"/>
    </source>
</evidence>
<evidence type="ECO:0000255" key="2"/>
<evidence type="ECO:0000256" key="3">
    <source>
        <dbReference type="SAM" id="MobiDB-lite"/>
    </source>
</evidence>
<evidence type="ECO:0000269" key="4">
    <source>
    </source>
</evidence>
<evidence type="ECO:0000269" key="5">
    <source>
    </source>
</evidence>
<evidence type="ECO:0000303" key="6">
    <source>
    </source>
</evidence>
<evidence type="ECO:0000303" key="7">
    <source>
    </source>
</evidence>
<evidence type="ECO:0000305" key="8"/>
<evidence type="ECO:0000305" key="9">
    <source>
    </source>
</evidence>
<evidence type="ECO:0000312" key="10">
    <source>
        <dbReference type="Araport" id="AT5G08760"/>
    </source>
</evidence>
<evidence type="ECO:0000312" key="11">
    <source>
        <dbReference type="EMBL" id="CAC35881.1"/>
    </source>
</evidence>
<protein>
    <recommendedName>
        <fullName evidence="7">Serine rich endogenous peptide 15</fullName>
        <shortName evidence="7">AtSCOOP15</shortName>
    </recommendedName>
    <alternativeName>
        <fullName evidence="7">Phytocytokine SCOOP15</fullName>
    </alternativeName>
    <alternativeName>
        <fullName evidence="7">Precursor of serine rich endogenous peptide phytocytokine 15</fullName>
    </alternativeName>
    <alternativeName>
        <fullName evidence="6">Secreted transmembrane peptide 8</fullName>
    </alternativeName>
</protein>
<gene>
    <name evidence="7" type="primary">PROSCOOP15</name>
    <name evidence="7" type="synonym">SCOOP15</name>
    <name evidence="6" type="synonym">STMP8</name>
    <name evidence="10" type="ordered locus">At5g08760</name>
    <name evidence="11" type="ORF">T2K12</name>
</gene>
<accession>F4KCH3</accession>
<accession>Q9C5A1</accession>
<name>SOP15_ARATH</name>
<organism>
    <name type="scientific">Arabidopsis thaliana</name>
    <name type="common">Mouse-ear cress</name>
    <dbReference type="NCBI Taxonomy" id="3702"/>
    <lineage>
        <taxon>Eukaryota</taxon>
        <taxon>Viridiplantae</taxon>
        <taxon>Streptophyta</taxon>
        <taxon>Embryophyta</taxon>
        <taxon>Tracheophyta</taxon>
        <taxon>Spermatophyta</taxon>
        <taxon>Magnoliopsida</taxon>
        <taxon>eudicotyledons</taxon>
        <taxon>Gunneridae</taxon>
        <taxon>Pentapetalae</taxon>
        <taxon>rosids</taxon>
        <taxon>malvids</taxon>
        <taxon>Brassicales</taxon>
        <taxon>Brassicaceae</taxon>
        <taxon>Camelineae</taxon>
        <taxon>Arabidopsis</taxon>
    </lineage>
</organism>
<sequence>MSKEKSYVIALLLSLLLCLSFQVGVSEANYNAVTTRYSDSPRCANGSSASPPTRHCPRGRPRPPTPRVAVHSNSTKGKGP</sequence>